<reference key="1">
    <citation type="journal article" date="1997" name="Nature">
        <title>The nucleotide sequence of Saccharomyces cerevisiae chromosome XVI.</title>
        <authorList>
            <person name="Bussey H."/>
            <person name="Storms R.K."/>
            <person name="Ahmed A."/>
            <person name="Albermann K."/>
            <person name="Allen E."/>
            <person name="Ansorge W."/>
            <person name="Araujo R."/>
            <person name="Aparicio A."/>
            <person name="Barrell B.G."/>
            <person name="Badcock K."/>
            <person name="Benes V."/>
            <person name="Botstein D."/>
            <person name="Bowman S."/>
            <person name="Brueckner M."/>
            <person name="Carpenter J."/>
            <person name="Cherry J.M."/>
            <person name="Chung E."/>
            <person name="Churcher C.M."/>
            <person name="Coster F."/>
            <person name="Davis K."/>
            <person name="Davis R.W."/>
            <person name="Dietrich F.S."/>
            <person name="Delius H."/>
            <person name="DiPaolo T."/>
            <person name="Dubois E."/>
            <person name="Duesterhoeft A."/>
            <person name="Duncan M."/>
            <person name="Floeth M."/>
            <person name="Fortin N."/>
            <person name="Friesen J.D."/>
            <person name="Fritz C."/>
            <person name="Goffeau A."/>
            <person name="Hall J."/>
            <person name="Hebling U."/>
            <person name="Heumann K."/>
            <person name="Hilbert H."/>
            <person name="Hillier L.W."/>
            <person name="Hunicke-Smith S."/>
            <person name="Hyman R.W."/>
            <person name="Johnston M."/>
            <person name="Kalman S."/>
            <person name="Kleine K."/>
            <person name="Komp C."/>
            <person name="Kurdi O."/>
            <person name="Lashkari D."/>
            <person name="Lew H."/>
            <person name="Lin A."/>
            <person name="Lin D."/>
            <person name="Louis E.J."/>
            <person name="Marathe R."/>
            <person name="Messenguy F."/>
            <person name="Mewes H.-W."/>
            <person name="Mirtipati S."/>
            <person name="Moestl D."/>
            <person name="Mueller-Auer S."/>
            <person name="Namath A."/>
            <person name="Nentwich U."/>
            <person name="Oefner P."/>
            <person name="Pearson D."/>
            <person name="Petel F.X."/>
            <person name="Pohl T.M."/>
            <person name="Purnelle B."/>
            <person name="Rajandream M.A."/>
            <person name="Rechmann S."/>
            <person name="Rieger M."/>
            <person name="Riles L."/>
            <person name="Roberts D."/>
            <person name="Schaefer M."/>
            <person name="Scharfe M."/>
            <person name="Scherens B."/>
            <person name="Schramm S."/>
            <person name="Schroeder M."/>
            <person name="Sdicu A.-M."/>
            <person name="Tettelin H."/>
            <person name="Urrestarazu L.A."/>
            <person name="Ushinsky S."/>
            <person name="Vierendeels F."/>
            <person name="Vissers S."/>
            <person name="Voss H."/>
            <person name="Walsh S.V."/>
            <person name="Wambutt R."/>
            <person name="Wang Y."/>
            <person name="Wedler E."/>
            <person name="Wedler H."/>
            <person name="Winnett E."/>
            <person name="Zhong W.-W."/>
            <person name="Zollner A."/>
            <person name="Vo D.H."/>
            <person name="Hani J."/>
        </authorList>
    </citation>
    <scope>NUCLEOTIDE SEQUENCE [LARGE SCALE GENOMIC DNA]</scope>
    <source>
        <strain>ATCC 204508 / S288c</strain>
    </source>
</reference>
<reference key="2">
    <citation type="journal article" date="2014" name="G3 (Bethesda)">
        <title>The reference genome sequence of Saccharomyces cerevisiae: Then and now.</title>
        <authorList>
            <person name="Engel S.R."/>
            <person name="Dietrich F.S."/>
            <person name="Fisk D.G."/>
            <person name="Binkley G."/>
            <person name="Balakrishnan R."/>
            <person name="Costanzo M.C."/>
            <person name="Dwight S.S."/>
            <person name="Hitz B.C."/>
            <person name="Karra K."/>
            <person name="Nash R.S."/>
            <person name="Weng S."/>
            <person name="Wong E.D."/>
            <person name="Lloyd P."/>
            <person name="Skrzypek M.S."/>
            <person name="Miyasato S.R."/>
            <person name="Simison M."/>
            <person name="Cherry J.M."/>
        </authorList>
    </citation>
    <scope>GENOME REANNOTATION</scope>
    <source>
        <strain>ATCC 204508 / S288c</strain>
    </source>
</reference>
<reference key="3">
    <citation type="journal article" date="2007" name="Genome Res.">
        <title>Approaching a complete repository of sequence-verified protein-encoding clones for Saccharomyces cerevisiae.</title>
        <authorList>
            <person name="Hu Y."/>
            <person name="Rolfs A."/>
            <person name="Bhullar B."/>
            <person name="Murthy T.V.S."/>
            <person name="Zhu C."/>
            <person name="Berger M.F."/>
            <person name="Camargo A.A."/>
            <person name="Kelley F."/>
            <person name="McCarron S."/>
            <person name="Jepson D."/>
            <person name="Richardson A."/>
            <person name="Raphael J."/>
            <person name="Moreira D."/>
            <person name="Taycher E."/>
            <person name="Zuo D."/>
            <person name="Mohr S."/>
            <person name="Kane M.F."/>
            <person name="Williamson J."/>
            <person name="Simpson A.J.G."/>
            <person name="Bulyk M.L."/>
            <person name="Harlow E."/>
            <person name="Marsischky G."/>
            <person name="Kolodner R.D."/>
            <person name="LaBaer J."/>
        </authorList>
    </citation>
    <scope>NUCLEOTIDE SEQUENCE [GENOMIC DNA]</scope>
    <source>
        <strain>ATCC 204508 / S288c</strain>
    </source>
</reference>
<sequence length="100" mass="11657">MALRKFVEDLLTVDLLARYLYRSVFHLFYEMTWYMRYLGAEFVIQCCSLHLISKLSSLIDIFICRFCYFNSLEFIPCALPGLASKAINNIATIASERSRP</sequence>
<proteinExistence type="uncertain"/>
<organism>
    <name type="scientific">Saccharomyces cerevisiae (strain ATCC 204508 / S288c)</name>
    <name type="common">Baker's yeast</name>
    <dbReference type="NCBI Taxonomy" id="559292"/>
    <lineage>
        <taxon>Eukaryota</taxon>
        <taxon>Fungi</taxon>
        <taxon>Dikarya</taxon>
        <taxon>Ascomycota</taxon>
        <taxon>Saccharomycotina</taxon>
        <taxon>Saccharomycetes</taxon>
        <taxon>Saccharomycetales</taxon>
        <taxon>Saccharomycetaceae</taxon>
        <taxon>Saccharomyces</taxon>
    </lineage>
</organism>
<protein>
    <recommendedName>
        <fullName>Putative uncharacterized protein YPL102C</fullName>
    </recommendedName>
</protein>
<comment type="miscellaneous">
    <text evidence="1">Partially overlaps ELP4.</text>
</comment>
<comment type="caution">
    <text evidence="2">Product of a dubious gene prediction unlikely to encode a functional protein. Because of that it is not part of the S.cerevisiae S288c complete/reference proteome set.</text>
</comment>
<accession>O13517</accession>
<feature type="chain" id="PRO_0000299802" description="Putative uncharacterized protein YPL102C">
    <location>
        <begin position="1"/>
        <end position="100"/>
    </location>
</feature>
<gene>
    <name type="ordered locus">YPL102C</name>
</gene>
<name>YP102_YEAST</name>
<dbReference type="EMBL" id="U43281">
    <property type="protein sequence ID" value="AAB68214.1"/>
    <property type="molecule type" value="Genomic_DNA"/>
</dbReference>
<dbReference type="EMBL" id="AY693364">
    <property type="protein sequence ID" value="AAT93383.1"/>
    <property type="molecule type" value="Genomic_DNA"/>
</dbReference>
<dbReference type="PIR" id="S69457">
    <property type="entry name" value="S69457"/>
</dbReference>
<dbReference type="DIP" id="DIP-5195N"/>
<dbReference type="IntAct" id="O13517">
    <property type="interactions" value="1"/>
</dbReference>
<dbReference type="STRING" id="4932.YPL102C"/>
<dbReference type="PaxDb" id="4932-YPL102C"/>
<dbReference type="EnsemblFungi" id="YPL102C_mRNA">
    <property type="protein sequence ID" value="YPL102C"/>
    <property type="gene ID" value="YPL102C"/>
</dbReference>
<dbReference type="AGR" id="SGD:S000006023"/>
<dbReference type="SGD" id="S000006023">
    <property type="gene designation" value="YPL102C"/>
</dbReference>
<dbReference type="HOGENOM" id="CLU_2308257_0_0_1"/>
<evidence type="ECO:0000305" key="1"/>
<evidence type="ECO:0000305" key="2">
    <source>
    </source>
</evidence>